<sequence>MTITPQEALQRTIEHREIFHDEMLHLMRLIMRGDMSPVMAAAIITGLRVKKETIGEIAAAATVMREFARRVEVEDNANFVDIVGTGGDGSHTFNISTATMFVAAAAGAKVAKHGNRGVSSKSGSADVLEALGVNIDLQPEQVAASIAETGMGFMFAPNHHPAMRNIAPVRRELGVRTIFNILGPLTNPADAPNQLMGVFHPDLVGIQVRVMQRLGAQHVLVVYGKDGMDEVSLGAATLVGELRDGEVREYEIHPEDFGMQMVSNRTLKVESADESRVMLLEALGNKPGVAREIVTLNAGTALYSADVAGSIADGIQLARDAIASGRAREKVDELVRFTQQFKR</sequence>
<organism>
    <name type="scientific">Burkholderia pseudomallei (strain 1710b)</name>
    <dbReference type="NCBI Taxonomy" id="320372"/>
    <lineage>
        <taxon>Bacteria</taxon>
        <taxon>Pseudomonadati</taxon>
        <taxon>Pseudomonadota</taxon>
        <taxon>Betaproteobacteria</taxon>
        <taxon>Burkholderiales</taxon>
        <taxon>Burkholderiaceae</taxon>
        <taxon>Burkholderia</taxon>
        <taxon>pseudomallei group</taxon>
    </lineage>
</organism>
<proteinExistence type="inferred from homology"/>
<feature type="chain" id="PRO_0000227143" description="Anthranilate phosphoribosyltransferase">
    <location>
        <begin position="1"/>
        <end position="343"/>
    </location>
</feature>
<feature type="binding site" evidence="1">
    <location>
        <position position="84"/>
    </location>
    <ligand>
        <name>5-phospho-alpha-D-ribose 1-diphosphate</name>
        <dbReference type="ChEBI" id="CHEBI:58017"/>
    </ligand>
</feature>
<feature type="binding site" evidence="1">
    <location>
        <position position="84"/>
    </location>
    <ligand>
        <name>anthranilate</name>
        <dbReference type="ChEBI" id="CHEBI:16567"/>
        <label>1</label>
    </ligand>
</feature>
<feature type="binding site" evidence="1">
    <location>
        <begin position="87"/>
        <end position="88"/>
    </location>
    <ligand>
        <name>5-phospho-alpha-D-ribose 1-diphosphate</name>
        <dbReference type="ChEBI" id="CHEBI:58017"/>
    </ligand>
</feature>
<feature type="binding site" evidence="1">
    <location>
        <position position="92"/>
    </location>
    <ligand>
        <name>5-phospho-alpha-D-ribose 1-diphosphate</name>
        <dbReference type="ChEBI" id="CHEBI:58017"/>
    </ligand>
</feature>
<feature type="binding site" evidence="1">
    <location>
        <begin position="94"/>
        <end position="97"/>
    </location>
    <ligand>
        <name>5-phospho-alpha-D-ribose 1-diphosphate</name>
        <dbReference type="ChEBI" id="CHEBI:58017"/>
    </ligand>
</feature>
<feature type="binding site" evidence="1">
    <location>
        <position position="96"/>
    </location>
    <ligand>
        <name>Mg(2+)</name>
        <dbReference type="ChEBI" id="CHEBI:18420"/>
        <label>1</label>
    </ligand>
</feature>
<feature type="binding site" evidence="1">
    <location>
        <begin position="112"/>
        <end position="120"/>
    </location>
    <ligand>
        <name>5-phospho-alpha-D-ribose 1-diphosphate</name>
        <dbReference type="ChEBI" id="CHEBI:58017"/>
    </ligand>
</feature>
<feature type="binding site" evidence="1">
    <location>
        <position position="115"/>
    </location>
    <ligand>
        <name>anthranilate</name>
        <dbReference type="ChEBI" id="CHEBI:16567"/>
        <label>1</label>
    </ligand>
</feature>
<feature type="binding site" evidence="1">
    <location>
        <position position="124"/>
    </location>
    <ligand>
        <name>5-phospho-alpha-D-ribose 1-diphosphate</name>
        <dbReference type="ChEBI" id="CHEBI:58017"/>
    </ligand>
</feature>
<feature type="binding site" evidence="1">
    <location>
        <position position="170"/>
    </location>
    <ligand>
        <name>anthranilate</name>
        <dbReference type="ChEBI" id="CHEBI:16567"/>
        <label>2</label>
    </ligand>
</feature>
<feature type="binding site" evidence="1">
    <location>
        <position position="229"/>
    </location>
    <ligand>
        <name>Mg(2+)</name>
        <dbReference type="ChEBI" id="CHEBI:18420"/>
        <label>2</label>
    </ligand>
</feature>
<feature type="binding site" evidence="1">
    <location>
        <position position="230"/>
    </location>
    <ligand>
        <name>Mg(2+)</name>
        <dbReference type="ChEBI" id="CHEBI:18420"/>
        <label>1</label>
    </ligand>
</feature>
<feature type="binding site" evidence="1">
    <location>
        <position position="230"/>
    </location>
    <ligand>
        <name>Mg(2+)</name>
        <dbReference type="ChEBI" id="CHEBI:18420"/>
        <label>2</label>
    </ligand>
</feature>
<dbReference type="EC" id="2.4.2.18" evidence="1"/>
<dbReference type="EMBL" id="CP000124">
    <property type="protein sequence ID" value="ABA48568.1"/>
    <property type="molecule type" value="Genomic_DNA"/>
</dbReference>
<dbReference type="RefSeq" id="WP_004186823.1">
    <property type="nucleotide sequence ID" value="NC_007434.1"/>
</dbReference>
<dbReference type="SMR" id="Q3JNB1"/>
<dbReference type="EnsemblBacteria" id="ABA48568">
    <property type="protein sequence ID" value="ABA48568"/>
    <property type="gene ID" value="BURPS1710b_3577"/>
</dbReference>
<dbReference type="GeneID" id="93061660"/>
<dbReference type="KEGG" id="bpm:BURPS1710b_3577"/>
<dbReference type="HOGENOM" id="CLU_034315_2_1_4"/>
<dbReference type="UniPathway" id="UPA00035">
    <property type="reaction ID" value="UER00041"/>
</dbReference>
<dbReference type="Proteomes" id="UP000002700">
    <property type="component" value="Chromosome I"/>
</dbReference>
<dbReference type="GO" id="GO:0005829">
    <property type="term" value="C:cytosol"/>
    <property type="evidence" value="ECO:0007669"/>
    <property type="project" value="TreeGrafter"/>
</dbReference>
<dbReference type="GO" id="GO:0004048">
    <property type="term" value="F:anthranilate phosphoribosyltransferase activity"/>
    <property type="evidence" value="ECO:0007669"/>
    <property type="project" value="UniProtKB-UniRule"/>
</dbReference>
<dbReference type="GO" id="GO:0000287">
    <property type="term" value="F:magnesium ion binding"/>
    <property type="evidence" value="ECO:0007669"/>
    <property type="project" value="UniProtKB-UniRule"/>
</dbReference>
<dbReference type="GO" id="GO:0000162">
    <property type="term" value="P:L-tryptophan biosynthetic process"/>
    <property type="evidence" value="ECO:0007669"/>
    <property type="project" value="UniProtKB-UniRule"/>
</dbReference>
<dbReference type="FunFam" id="1.20.970.10:FF:000006">
    <property type="entry name" value="Anthranilate phosphoribosyltransferase"/>
    <property type="match status" value="1"/>
</dbReference>
<dbReference type="FunFam" id="3.40.1030.10:FF:000002">
    <property type="entry name" value="Anthranilate phosphoribosyltransferase"/>
    <property type="match status" value="1"/>
</dbReference>
<dbReference type="Gene3D" id="3.40.1030.10">
    <property type="entry name" value="Nucleoside phosphorylase/phosphoribosyltransferase catalytic domain"/>
    <property type="match status" value="1"/>
</dbReference>
<dbReference type="Gene3D" id="1.20.970.10">
    <property type="entry name" value="Transferase, Pyrimidine Nucleoside Phosphorylase, Chain C"/>
    <property type="match status" value="1"/>
</dbReference>
<dbReference type="HAMAP" id="MF_00211">
    <property type="entry name" value="TrpD"/>
    <property type="match status" value="1"/>
</dbReference>
<dbReference type="InterPro" id="IPR005940">
    <property type="entry name" value="Anthranilate_Pribosyl_Tfrase"/>
</dbReference>
<dbReference type="InterPro" id="IPR000312">
    <property type="entry name" value="Glycosyl_Trfase_fam3"/>
</dbReference>
<dbReference type="InterPro" id="IPR017459">
    <property type="entry name" value="Glycosyl_Trfase_fam3_N_dom"/>
</dbReference>
<dbReference type="InterPro" id="IPR036320">
    <property type="entry name" value="Glycosyl_Trfase_fam3_N_dom_sf"/>
</dbReference>
<dbReference type="InterPro" id="IPR035902">
    <property type="entry name" value="Nuc_phospho_transferase"/>
</dbReference>
<dbReference type="NCBIfam" id="TIGR01245">
    <property type="entry name" value="trpD"/>
    <property type="match status" value="1"/>
</dbReference>
<dbReference type="PANTHER" id="PTHR43285">
    <property type="entry name" value="ANTHRANILATE PHOSPHORIBOSYLTRANSFERASE"/>
    <property type="match status" value="1"/>
</dbReference>
<dbReference type="PANTHER" id="PTHR43285:SF2">
    <property type="entry name" value="ANTHRANILATE PHOSPHORIBOSYLTRANSFERASE"/>
    <property type="match status" value="1"/>
</dbReference>
<dbReference type="Pfam" id="PF02885">
    <property type="entry name" value="Glycos_trans_3N"/>
    <property type="match status" value="1"/>
</dbReference>
<dbReference type="Pfam" id="PF00591">
    <property type="entry name" value="Glycos_transf_3"/>
    <property type="match status" value="1"/>
</dbReference>
<dbReference type="SUPFAM" id="SSF52418">
    <property type="entry name" value="Nucleoside phosphorylase/phosphoribosyltransferase catalytic domain"/>
    <property type="match status" value="1"/>
</dbReference>
<dbReference type="SUPFAM" id="SSF47648">
    <property type="entry name" value="Nucleoside phosphorylase/phosphoribosyltransferase N-terminal domain"/>
    <property type="match status" value="1"/>
</dbReference>
<accession>Q3JNB1</accession>
<comment type="function">
    <text evidence="1">Catalyzes the transfer of the phosphoribosyl group of 5-phosphorylribose-1-pyrophosphate (PRPP) to anthranilate to yield N-(5'-phosphoribosyl)-anthranilate (PRA).</text>
</comment>
<comment type="catalytic activity">
    <reaction evidence="1">
        <text>N-(5-phospho-beta-D-ribosyl)anthranilate + diphosphate = 5-phospho-alpha-D-ribose 1-diphosphate + anthranilate</text>
        <dbReference type="Rhea" id="RHEA:11768"/>
        <dbReference type="ChEBI" id="CHEBI:16567"/>
        <dbReference type="ChEBI" id="CHEBI:18277"/>
        <dbReference type="ChEBI" id="CHEBI:33019"/>
        <dbReference type="ChEBI" id="CHEBI:58017"/>
        <dbReference type="EC" id="2.4.2.18"/>
    </reaction>
</comment>
<comment type="cofactor">
    <cofactor evidence="1">
        <name>Mg(2+)</name>
        <dbReference type="ChEBI" id="CHEBI:18420"/>
    </cofactor>
    <text evidence="1">Binds 2 magnesium ions per monomer.</text>
</comment>
<comment type="pathway">
    <text evidence="1">Amino-acid biosynthesis; L-tryptophan biosynthesis; L-tryptophan from chorismate: step 2/5.</text>
</comment>
<comment type="subunit">
    <text evidence="1">Homodimer.</text>
</comment>
<comment type="similarity">
    <text evidence="1">Belongs to the anthranilate phosphoribosyltransferase family.</text>
</comment>
<protein>
    <recommendedName>
        <fullName evidence="1">Anthranilate phosphoribosyltransferase</fullName>
        <ecNumber evidence="1">2.4.2.18</ecNumber>
    </recommendedName>
</protein>
<name>TRPD_BURP1</name>
<keyword id="KW-0028">Amino-acid biosynthesis</keyword>
<keyword id="KW-0057">Aromatic amino acid biosynthesis</keyword>
<keyword id="KW-0328">Glycosyltransferase</keyword>
<keyword id="KW-0460">Magnesium</keyword>
<keyword id="KW-0479">Metal-binding</keyword>
<keyword id="KW-0808">Transferase</keyword>
<keyword id="KW-0822">Tryptophan biosynthesis</keyword>
<reference key="1">
    <citation type="journal article" date="2010" name="Genome Biol. Evol.">
        <title>Continuing evolution of Burkholderia mallei through genome reduction and large-scale rearrangements.</title>
        <authorList>
            <person name="Losada L."/>
            <person name="Ronning C.M."/>
            <person name="DeShazer D."/>
            <person name="Woods D."/>
            <person name="Fedorova N."/>
            <person name="Kim H.S."/>
            <person name="Shabalina S.A."/>
            <person name="Pearson T.R."/>
            <person name="Brinkac L."/>
            <person name="Tan P."/>
            <person name="Nandi T."/>
            <person name="Crabtree J."/>
            <person name="Badger J."/>
            <person name="Beckstrom-Sternberg S."/>
            <person name="Saqib M."/>
            <person name="Schutzer S.E."/>
            <person name="Keim P."/>
            <person name="Nierman W.C."/>
        </authorList>
    </citation>
    <scope>NUCLEOTIDE SEQUENCE [LARGE SCALE GENOMIC DNA]</scope>
    <source>
        <strain>1710b</strain>
    </source>
</reference>
<gene>
    <name evidence="1" type="primary">trpD</name>
    <name type="ordered locus">BURPS1710b_3577</name>
</gene>
<evidence type="ECO:0000255" key="1">
    <source>
        <dbReference type="HAMAP-Rule" id="MF_00211"/>
    </source>
</evidence>